<organism>
    <name type="scientific">Janthinobacterium sp. (strain Marseille)</name>
    <name type="common">Minibacterium massiliensis</name>
    <dbReference type="NCBI Taxonomy" id="375286"/>
    <lineage>
        <taxon>Bacteria</taxon>
        <taxon>Pseudomonadati</taxon>
        <taxon>Pseudomonadota</taxon>
        <taxon>Betaproteobacteria</taxon>
        <taxon>Burkholderiales</taxon>
        <taxon>Oxalobacteraceae</taxon>
        <taxon>Janthinobacterium</taxon>
    </lineage>
</organism>
<keyword id="KW-0418">Kinase</keyword>
<keyword id="KW-0547">Nucleotide-binding</keyword>
<keyword id="KW-0723">Serine/threonine-protein kinase</keyword>
<keyword id="KW-0808">Transferase</keyword>
<gene>
    <name type="ordered locus">mma_2042</name>
</gene>
<feature type="chain" id="PRO_0000316683" description="Putative phosphoenolpyruvate synthase regulatory protein">
    <location>
        <begin position="1"/>
        <end position="282"/>
    </location>
</feature>
<feature type="binding site" evidence="1">
    <location>
        <begin position="161"/>
        <end position="168"/>
    </location>
    <ligand>
        <name>ADP</name>
        <dbReference type="ChEBI" id="CHEBI:456216"/>
    </ligand>
</feature>
<reference key="1">
    <citation type="journal article" date="2007" name="PLoS Genet.">
        <title>Genome analysis of Minibacterium massiliensis highlights the convergent evolution of water-living bacteria.</title>
        <authorList>
            <person name="Audic S."/>
            <person name="Robert C."/>
            <person name="Campagna B."/>
            <person name="Parinello H."/>
            <person name="Claverie J.-M."/>
            <person name="Raoult D."/>
            <person name="Drancourt M."/>
        </authorList>
    </citation>
    <scope>NUCLEOTIDE SEQUENCE [LARGE SCALE GENOMIC DNA]</scope>
    <source>
        <strain>Marseille</strain>
    </source>
</reference>
<dbReference type="EC" id="2.7.11.33" evidence="1"/>
<dbReference type="EC" id="2.7.4.28" evidence="1"/>
<dbReference type="EMBL" id="CP000269">
    <property type="protein sequence ID" value="ABR89448.1"/>
    <property type="molecule type" value="Genomic_DNA"/>
</dbReference>
<dbReference type="RefSeq" id="WP_012079895.1">
    <property type="nucleotide sequence ID" value="NC_009659.1"/>
</dbReference>
<dbReference type="SMR" id="A6SZN5"/>
<dbReference type="STRING" id="375286.mma_2042"/>
<dbReference type="KEGG" id="mms:mma_2042"/>
<dbReference type="eggNOG" id="COG1806">
    <property type="taxonomic scope" value="Bacteria"/>
</dbReference>
<dbReference type="HOGENOM" id="CLU_046206_1_0_4"/>
<dbReference type="OrthoDB" id="9782201at2"/>
<dbReference type="Proteomes" id="UP000006388">
    <property type="component" value="Chromosome"/>
</dbReference>
<dbReference type="GO" id="GO:0043531">
    <property type="term" value="F:ADP binding"/>
    <property type="evidence" value="ECO:0007669"/>
    <property type="project" value="UniProtKB-UniRule"/>
</dbReference>
<dbReference type="GO" id="GO:0005524">
    <property type="term" value="F:ATP binding"/>
    <property type="evidence" value="ECO:0007669"/>
    <property type="project" value="InterPro"/>
</dbReference>
<dbReference type="GO" id="GO:0016776">
    <property type="term" value="F:phosphotransferase activity, phosphate group as acceptor"/>
    <property type="evidence" value="ECO:0007669"/>
    <property type="project" value="UniProtKB-UniRule"/>
</dbReference>
<dbReference type="GO" id="GO:0004674">
    <property type="term" value="F:protein serine/threonine kinase activity"/>
    <property type="evidence" value="ECO:0007669"/>
    <property type="project" value="UniProtKB-UniRule"/>
</dbReference>
<dbReference type="HAMAP" id="MF_01062">
    <property type="entry name" value="PSRP"/>
    <property type="match status" value="1"/>
</dbReference>
<dbReference type="InterPro" id="IPR005177">
    <property type="entry name" value="Kinase-pyrophosphorylase"/>
</dbReference>
<dbReference type="InterPro" id="IPR026530">
    <property type="entry name" value="PSRP"/>
</dbReference>
<dbReference type="NCBIfam" id="NF003742">
    <property type="entry name" value="PRK05339.1"/>
    <property type="match status" value="1"/>
</dbReference>
<dbReference type="PANTHER" id="PTHR31756">
    <property type="entry name" value="PYRUVATE, PHOSPHATE DIKINASE REGULATORY PROTEIN 1, CHLOROPLASTIC"/>
    <property type="match status" value="1"/>
</dbReference>
<dbReference type="PANTHER" id="PTHR31756:SF3">
    <property type="entry name" value="PYRUVATE, PHOSPHATE DIKINASE REGULATORY PROTEIN 1, CHLOROPLASTIC"/>
    <property type="match status" value="1"/>
</dbReference>
<dbReference type="Pfam" id="PF03618">
    <property type="entry name" value="Kinase-PPPase"/>
    <property type="match status" value="1"/>
</dbReference>
<comment type="function">
    <text evidence="1">Bifunctional serine/threonine kinase and phosphorylase involved in the regulation of the phosphoenolpyruvate synthase (PEPS) by catalyzing its phosphorylation/dephosphorylation.</text>
</comment>
<comment type="catalytic activity">
    <reaction evidence="1">
        <text>[pyruvate, water dikinase] + ADP = [pyruvate, water dikinase]-phosphate + AMP + H(+)</text>
        <dbReference type="Rhea" id="RHEA:46020"/>
        <dbReference type="Rhea" id="RHEA-COMP:11425"/>
        <dbReference type="Rhea" id="RHEA-COMP:11426"/>
        <dbReference type="ChEBI" id="CHEBI:15378"/>
        <dbReference type="ChEBI" id="CHEBI:43176"/>
        <dbReference type="ChEBI" id="CHEBI:68546"/>
        <dbReference type="ChEBI" id="CHEBI:456215"/>
        <dbReference type="ChEBI" id="CHEBI:456216"/>
        <dbReference type="EC" id="2.7.11.33"/>
    </reaction>
</comment>
<comment type="catalytic activity">
    <reaction evidence="1">
        <text>[pyruvate, water dikinase]-phosphate + phosphate + H(+) = [pyruvate, water dikinase] + diphosphate</text>
        <dbReference type="Rhea" id="RHEA:48580"/>
        <dbReference type="Rhea" id="RHEA-COMP:11425"/>
        <dbReference type="Rhea" id="RHEA-COMP:11426"/>
        <dbReference type="ChEBI" id="CHEBI:15378"/>
        <dbReference type="ChEBI" id="CHEBI:33019"/>
        <dbReference type="ChEBI" id="CHEBI:43176"/>
        <dbReference type="ChEBI" id="CHEBI:43474"/>
        <dbReference type="ChEBI" id="CHEBI:68546"/>
        <dbReference type="EC" id="2.7.4.28"/>
    </reaction>
</comment>
<comment type="similarity">
    <text evidence="1">Belongs to the pyruvate, phosphate/water dikinase regulatory protein family. PSRP subfamily.</text>
</comment>
<name>PSRP_JANMA</name>
<protein>
    <recommendedName>
        <fullName evidence="1">Putative phosphoenolpyruvate synthase regulatory protein</fullName>
        <shortName evidence="1">PEP synthase regulatory protein</shortName>
        <shortName evidence="1">PSRP</shortName>
        <ecNumber evidence="1">2.7.11.33</ecNumber>
        <ecNumber evidence="1">2.7.4.28</ecNumber>
    </recommendedName>
    <alternativeName>
        <fullName evidence="1">Pyruvate, water dikinase regulatory protein</fullName>
    </alternativeName>
</protein>
<proteinExistence type="inferred from homology"/>
<accession>A6SZN5</accession>
<evidence type="ECO:0000255" key="1">
    <source>
        <dbReference type="HAMAP-Rule" id="MF_01062"/>
    </source>
</evidence>
<sequence>MSQPVERSPASTRTVFFVSDGTGITAETFGHSVLTQFELRFKQVRLPFIDTPDKAYDALRKINETFAADGQRPIIFSTLVKADLSSIVRQSQGMHMDLIQTFVEPLEQELGVKSTHTIGRSHTSTDSEEYKNRIEAINFSLAHDDGQSHKNLSAADVILVGVSRSGKTPTSLFLAMQYGIKAANYPLIPDDFEREKLPGGLQAYKHKIFGLSIAADRLAEIRNERLPGSKYAALENCRYEVNEAERMMRREGIRWMSSTTKSIEEIAATILQEIKLDPPIKD</sequence>